<reference key="1">
    <citation type="submission" date="2000-05" db="EMBL/GenBank/DDBJ databases">
        <title>Transcripts in human map region 12p13.3.</title>
        <authorList>
            <person name="Lorenz B."/>
            <person name="Strom T.M."/>
        </authorList>
    </citation>
    <scope>NUCLEOTIDE SEQUENCE [MRNA] (ISOFORM 3)</scope>
    <source>
        <tissue>Testis</tissue>
    </source>
</reference>
<reference key="2">
    <citation type="journal article" date="2004" name="Nat. Genet.">
        <title>Complete sequencing and characterization of 21,243 full-length human cDNAs.</title>
        <authorList>
            <person name="Ota T."/>
            <person name="Suzuki Y."/>
            <person name="Nishikawa T."/>
            <person name="Otsuki T."/>
            <person name="Sugiyama T."/>
            <person name="Irie R."/>
            <person name="Wakamatsu A."/>
            <person name="Hayashi K."/>
            <person name="Sato H."/>
            <person name="Nagai K."/>
            <person name="Kimura K."/>
            <person name="Makita H."/>
            <person name="Sekine M."/>
            <person name="Obayashi M."/>
            <person name="Nishi T."/>
            <person name="Shibahara T."/>
            <person name="Tanaka T."/>
            <person name="Ishii S."/>
            <person name="Yamamoto J."/>
            <person name="Saito K."/>
            <person name="Kawai Y."/>
            <person name="Isono Y."/>
            <person name="Nakamura Y."/>
            <person name="Nagahari K."/>
            <person name="Murakami K."/>
            <person name="Yasuda T."/>
            <person name="Iwayanagi T."/>
            <person name="Wagatsuma M."/>
            <person name="Shiratori A."/>
            <person name="Sudo H."/>
            <person name="Hosoiri T."/>
            <person name="Kaku Y."/>
            <person name="Kodaira H."/>
            <person name="Kondo H."/>
            <person name="Sugawara M."/>
            <person name="Takahashi M."/>
            <person name="Kanda K."/>
            <person name="Yokoi T."/>
            <person name="Furuya T."/>
            <person name="Kikkawa E."/>
            <person name="Omura Y."/>
            <person name="Abe K."/>
            <person name="Kamihara K."/>
            <person name="Katsuta N."/>
            <person name="Sato K."/>
            <person name="Tanikawa M."/>
            <person name="Yamazaki M."/>
            <person name="Ninomiya K."/>
            <person name="Ishibashi T."/>
            <person name="Yamashita H."/>
            <person name="Murakawa K."/>
            <person name="Fujimori K."/>
            <person name="Tanai H."/>
            <person name="Kimata M."/>
            <person name="Watanabe M."/>
            <person name="Hiraoka S."/>
            <person name="Chiba Y."/>
            <person name="Ishida S."/>
            <person name="Ono Y."/>
            <person name="Takiguchi S."/>
            <person name="Watanabe S."/>
            <person name="Yosida M."/>
            <person name="Hotuta T."/>
            <person name="Kusano J."/>
            <person name="Kanehori K."/>
            <person name="Takahashi-Fujii A."/>
            <person name="Hara H."/>
            <person name="Tanase T.-O."/>
            <person name="Nomura Y."/>
            <person name="Togiya S."/>
            <person name="Komai F."/>
            <person name="Hara R."/>
            <person name="Takeuchi K."/>
            <person name="Arita M."/>
            <person name="Imose N."/>
            <person name="Musashino K."/>
            <person name="Yuuki H."/>
            <person name="Oshima A."/>
            <person name="Sasaki N."/>
            <person name="Aotsuka S."/>
            <person name="Yoshikawa Y."/>
            <person name="Matsunawa H."/>
            <person name="Ichihara T."/>
            <person name="Shiohata N."/>
            <person name="Sano S."/>
            <person name="Moriya S."/>
            <person name="Momiyama H."/>
            <person name="Satoh N."/>
            <person name="Takami S."/>
            <person name="Terashima Y."/>
            <person name="Suzuki O."/>
            <person name="Nakagawa S."/>
            <person name="Senoh A."/>
            <person name="Mizoguchi H."/>
            <person name="Goto Y."/>
            <person name="Shimizu F."/>
            <person name="Wakebe H."/>
            <person name="Hishigaki H."/>
            <person name="Watanabe T."/>
            <person name="Sugiyama A."/>
            <person name="Takemoto M."/>
            <person name="Kawakami B."/>
            <person name="Yamazaki M."/>
            <person name="Watanabe K."/>
            <person name="Kumagai A."/>
            <person name="Itakura S."/>
            <person name="Fukuzumi Y."/>
            <person name="Fujimori Y."/>
            <person name="Komiyama M."/>
            <person name="Tashiro H."/>
            <person name="Tanigami A."/>
            <person name="Fujiwara T."/>
            <person name="Ono T."/>
            <person name="Yamada K."/>
            <person name="Fujii Y."/>
            <person name="Ozaki K."/>
            <person name="Hirao M."/>
            <person name="Ohmori Y."/>
            <person name="Kawabata A."/>
            <person name="Hikiji T."/>
            <person name="Kobatake N."/>
            <person name="Inagaki H."/>
            <person name="Ikema Y."/>
            <person name="Okamoto S."/>
            <person name="Okitani R."/>
            <person name="Kawakami T."/>
            <person name="Noguchi S."/>
            <person name="Itoh T."/>
            <person name="Shigeta K."/>
            <person name="Senba T."/>
            <person name="Matsumura K."/>
            <person name="Nakajima Y."/>
            <person name="Mizuno T."/>
            <person name="Morinaga M."/>
            <person name="Sasaki M."/>
            <person name="Togashi T."/>
            <person name="Oyama M."/>
            <person name="Hata H."/>
            <person name="Watanabe M."/>
            <person name="Komatsu T."/>
            <person name="Mizushima-Sugano J."/>
            <person name="Satoh T."/>
            <person name="Shirai Y."/>
            <person name="Takahashi Y."/>
            <person name="Nakagawa K."/>
            <person name="Okumura K."/>
            <person name="Nagase T."/>
            <person name="Nomura N."/>
            <person name="Kikuchi H."/>
            <person name="Masuho Y."/>
            <person name="Yamashita R."/>
            <person name="Nakai K."/>
            <person name="Yada T."/>
            <person name="Nakamura Y."/>
            <person name="Ohara O."/>
            <person name="Isogai T."/>
            <person name="Sugano S."/>
        </authorList>
    </citation>
    <scope>NUCLEOTIDE SEQUENCE [LARGE SCALE MRNA] (ISOFORM 2)</scope>
</reference>
<reference key="3">
    <citation type="journal article" date="2007" name="BMC Genomics">
        <title>The full-ORF clone resource of the German cDNA consortium.</title>
        <authorList>
            <person name="Bechtel S."/>
            <person name="Rosenfelder H."/>
            <person name="Duda A."/>
            <person name="Schmidt C.P."/>
            <person name="Ernst U."/>
            <person name="Wellenreuther R."/>
            <person name="Mehrle A."/>
            <person name="Schuster C."/>
            <person name="Bahr A."/>
            <person name="Bloecker H."/>
            <person name="Heubner D."/>
            <person name="Hoerlein A."/>
            <person name="Michel G."/>
            <person name="Wedler H."/>
            <person name="Koehrer K."/>
            <person name="Ottenwaelder B."/>
            <person name="Poustka A."/>
            <person name="Wiemann S."/>
            <person name="Schupp I."/>
        </authorList>
    </citation>
    <scope>NUCLEOTIDE SEQUENCE [LARGE SCALE MRNA] (ISOFORM 2)</scope>
    <source>
        <tissue>Liver</tissue>
    </source>
</reference>
<reference key="4">
    <citation type="journal article" date="2006" name="Nature">
        <title>The finished DNA sequence of human chromosome 12.</title>
        <authorList>
            <person name="Scherer S.E."/>
            <person name="Muzny D.M."/>
            <person name="Buhay C.J."/>
            <person name="Chen R."/>
            <person name="Cree A."/>
            <person name="Ding Y."/>
            <person name="Dugan-Rocha S."/>
            <person name="Gill R."/>
            <person name="Gunaratne P."/>
            <person name="Harris R.A."/>
            <person name="Hawes A.C."/>
            <person name="Hernandez J."/>
            <person name="Hodgson A.V."/>
            <person name="Hume J."/>
            <person name="Jackson A."/>
            <person name="Khan Z.M."/>
            <person name="Kovar-Smith C."/>
            <person name="Lewis L.R."/>
            <person name="Lozado R.J."/>
            <person name="Metzker M.L."/>
            <person name="Milosavljevic A."/>
            <person name="Miner G.R."/>
            <person name="Montgomery K.T."/>
            <person name="Morgan M.B."/>
            <person name="Nazareth L.V."/>
            <person name="Scott G."/>
            <person name="Sodergren E."/>
            <person name="Song X.-Z."/>
            <person name="Steffen D."/>
            <person name="Lovering R.C."/>
            <person name="Wheeler D.A."/>
            <person name="Worley K.C."/>
            <person name="Yuan Y."/>
            <person name="Zhang Z."/>
            <person name="Adams C.Q."/>
            <person name="Ansari-Lari M.A."/>
            <person name="Ayele M."/>
            <person name="Brown M.J."/>
            <person name="Chen G."/>
            <person name="Chen Z."/>
            <person name="Clerc-Blankenburg K.P."/>
            <person name="Davis C."/>
            <person name="Delgado O."/>
            <person name="Dinh H.H."/>
            <person name="Draper H."/>
            <person name="Gonzalez-Garay M.L."/>
            <person name="Havlak P."/>
            <person name="Jackson L.R."/>
            <person name="Jacob L.S."/>
            <person name="Kelly S.H."/>
            <person name="Li L."/>
            <person name="Li Z."/>
            <person name="Liu J."/>
            <person name="Liu W."/>
            <person name="Lu J."/>
            <person name="Maheshwari M."/>
            <person name="Nguyen B.-V."/>
            <person name="Okwuonu G.O."/>
            <person name="Pasternak S."/>
            <person name="Perez L.M."/>
            <person name="Plopper F.J.H."/>
            <person name="Santibanez J."/>
            <person name="Shen H."/>
            <person name="Tabor P.E."/>
            <person name="Verduzco D."/>
            <person name="Waldron L."/>
            <person name="Wang Q."/>
            <person name="Williams G.A."/>
            <person name="Zhang J."/>
            <person name="Zhou J."/>
            <person name="Allen C.C."/>
            <person name="Amin A.G."/>
            <person name="Anyalebechi V."/>
            <person name="Bailey M."/>
            <person name="Barbaria J.A."/>
            <person name="Bimage K.E."/>
            <person name="Bryant N.P."/>
            <person name="Burch P.E."/>
            <person name="Burkett C.E."/>
            <person name="Burrell K.L."/>
            <person name="Calderon E."/>
            <person name="Cardenas V."/>
            <person name="Carter K."/>
            <person name="Casias K."/>
            <person name="Cavazos I."/>
            <person name="Cavazos S.R."/>
            <person name="Ceasar H."/>
            <person name="Chacko J."/>
            <person name="Chan S.N."/>
            <person name="Chavez D."/>
            <person name="Christopoulos C."/>
            <person name="Chu J."/>
            <person name="Cockrell R."/>
            <person name="Cox C.D."/>
            <person name="Dang M."/>
            <person name="Dathorne S.R."/>
            <person name="David R."/>
            <person name="Davis C.M."/>
            <person name="Davy-Carroll L."/>
            <person name="Deshazo D.R."/>
            <person name="Donlin J.E."/>
            <person name="D'Souza L."/>
            <person name="Eaves K.A."/>
            <person name="Egan A."/>
            <person name="Emery-Cohen A.J."/>
            <person name="Escotto M."/>
            <person name="Flagg N."/>
            <person name="Forbes L.D."/>
            <person name="Gabisi A.M."/>
            <person name="Garza M."/>
            <person name="Hamilton C."/>
            <person name="Henderson N."/>
            <person name="Hernandez O."/>
            <person name="Hines S."/>
            <person name="Hogues M.E."/>
            <person name="Huang M."/>
            <person name="Idlebird D.G."/>
            <person name="Johnson R."/>
            <person name="Jolivet A."/>
            <person name="Jones S."/>
            <person name="Kagan R."/>
            <person name="King L.M."/>
            <person name="Leal B."/>
            <person name="Lebow H."/>
            <person name="Lee S."/>
            <person name="LeVan J.M."/>
            <person name="Lewis L.C."/>
            <person name="London P."/>
            <person name="Lorensuhewa L.M."/>
            <person name="Loulseged H."/>
            <person name="Lovett D.A."/>
            <person name="Lucier A."/>
            <person name="Lucier R.L."/>
            <person name="Ma J."/>
            <person name="Madu R.C."/>
            <person name="Mapua P."/>
            <person name="Martindale A.D."/>
            <person name="Martinez E."/>
            <person name="Massey E."/>
            <person name="Mawhiney S."/>
            <person name="Meador M.G."/>
            <person name="Mendez S."/>
            <person name="Mercado C."/>
            <person name="Mercado I.C."/>
            <person name="Merritt C.E."/>
            <person name="Miner Z.L."/>
            <person name="Minja E."/>
            <person name="Mitchell T."/>
            <person name="Mohabbat F."/>
            <person name="Mohabbat K."/>
            <person name="Montgomery B."/>
            <person name="Moore N."/>
            <person name="Morris S."/>
            <person name="Munidasa M."/>
            <person name="Ngo R.N."/>
            <person name="Nguyen N.B."/>
            <person name="Nickerson E."/>
            <person name="Nwaokelemeh O.O."/>
            <person name="Nwokenkwo S."/>
            <person name="Obregon M."/>
            <person name="Oguh M."/>
            <person name="Oragunye N."/>
            <person name="Oviedo R.J."/>
            <person name="Parish B.J."/>
            <person name="Parker D.N."/>
            <person name="Parrish J."/>
            <person name="Parks K.L."/>
            <person name="Paul H.A."/>
            <person name="Payton B.A."/>
            <person name="Perez A."/>
            <person name="Perrin W."/>
            <person name="Pickens A."/>
            <person name="Primus E.L."/>
            <person name="Pu L.-L."/>
            <person name="Puazo M."/>
            <person name="Quiles M.M."/>
            <person name="Quiroz J.B."/>
            <person name="Rabata D."/>
            <person name="Reeves K."/>
            <person name="Ruiz S.J."/>
            <person name="Shao H."/>
            <person name="Sisson I."/>
            <person name="Sonaike T."/>
            <person name="Sorelle R.P."/>
            <person name="Sutton A.E."/>
            <person name="Svatek A.F."/>
            <person name="Svetz L.A."/>
            <person name="Tamerisa K.S."/>
            <person name="Taylor T.R."/>
            <person name="Teague B."/>
            <person name="Thomas N."/>
            <person name="Thorn R.D."/>
            <person name="Trejos Z.Y."/>
            <person name="Trevino B.K."/>
            <person name="Ukegbu O.N."/>
            <person name="Urban J.B."/>
            <person name="Vasquez L.I."/>
            <person name="Vera V.A."/>
            <person name="Villasana D.M."/>
            <person name="Wang L."/>
            <person name="Ward-Moore S."/>
            <person name="Warren J.T."/>
            <person name="Wei X."/>
            <person name="White F."/>
            <person name="Williamson A.L."/>
            <person name="Wleczyk R."/>
            <person name="Wooden H.S."/>
            <person name="Wooden S.H."/>
            <person name="Yen J."/>
            <person name="Yoon L."/>
            <person name="Yoon V."/>
            <person name="Zorrilla S.E."/>
            <person name="Nelson D."/>
            <person name="Kucherlapati R."/>
            <person name="Weinstock G."/>
            <person name="Gibbs R.A."/>
        </authorList>
    </citation>
    <scope>NUCLEOTIDE SEQUENCE [LARGE SCALE GENOMIC DNA]</scope>
</reference>
<reference key="5">
    <citation type="submission" date="2005-09" db="EMBL/GenBank/DDBJ databases">
        <authorList>
            <person name="Mural R.J."/>
            <person name="Istrail S."/>
            <person name="Sutton G.G."/>
            <person name="Florea L."/>
            <person name="Halpern A.L."/>
            <person name="Mobarry C.M."/>
            <person name="Lippert R."/>
            <person name="Walenz B."/>
            <person name="Shatkay H."/>
            <person name="Dew I."/>
            <person name="Miller J.R."/>
            <person name="Flanigan M.J."/>
            <person name="Edwards N.J."/>
            <person name="Bolanos R."/>
            <person name="Fasulo D."/>
            <person name="Halldorsson B.V."/>
            <person name="Hannenhalli S."/>
            <person name="Turner R."/>
            <person name="Yooseph S."/>
            <person name="Lu F."/>
            <person name="Nusskern D.R."/>
            <person name="Shue B.C."/>
            <person name="Zheng X.H."/>
            <person name="Zhong F."/>
            <person name="Delcher A.L."/>
            <person name="Huson D.H."/>
            <person name="Kravitz S.A."/>
            <person name="Mouchard L."/>
            <person name="Reinert K."/>
            <person name="Remington K.A."/>
            <person name="Clark A.G."/>
            <person name="Waterman M.S."/>
            <person name="Eichler E.E."/>
            <person name="Adams M.D."/>
            <person name="Hunkapiller M.W."/>
            <person name="Myers E.W."/>
            <person name="Venter J.C."/>
        </authorList>
    </citation>
    <scope>NUCLEOTIDE SEQUENCE [LARGE SCALE GENOMIC DNA]</scope>
</reference>
<reference key="6">
    <citation type="journal article" date="2004" name="Genome Res.">
        <title>The status, quality, and expansion of the NIH full-length cDNA project: the Mammalian Gene Collection (MGC).</title>
        <authorList>
            <consortium name="The MGC Project Team"/>
        </authorList>
    </citation>
    <scope>NUCLEOTIDE SEQUENCE [LARGE SCALE MRNA] (ISOFORMS 1 AND 4)</scope>
    <source>
        <tissue>Bone marrow</tissue>
        <tissue>Brain</tissue>
    </source>
</reference>
<reference key="7">
    <citation type="journal article" date="2010" name="Trends Biochem. Sci.">
        <title>Toward a unified nomenclature for mammalian ADP-ribosyltransferases.</title>
        <authorList>
            <person name="Hottiger M.O."/>
            <person name="Hassa P.O."/>
            <person name="Luscher B."/>
            <person name="Schuler H."/>
            <person name="Koch-Nolte F."/>
        </authorList>
    </citation>
    <scope>NOMENCLATURE</scope>
</reference>
<reference key="8">
    <citation type="journal article" date="2014" name="Nat. Commun.">
        <title>Family-wide analysis of poly(ADP-ribose) polymerase activity.</title>
        <authorList>
            <person name="Vyas S."/>
            <person name="Matic I."/>
            <person name="Uchima L."/>
            <person name="Rood J."/>
            <person name="Zaja R."/>
            <person name="Hay R.T."/>
            <person name="Ahel I."/>
            <person name="Chang P."/>
        </authorList>
    </citation>
    <scope>FUNCTION</scope>
    <scope>CATALYTIC ACTIVITY</scope>
    <scope>ADP-RIBOSYLATION AT GLU-13; LYS-18; CYS-56; CYS-72 AND ASP-87</scope>
</reference>
<reference key="9">
    <citation type="journal article" date="2015" name="Biol. Reprod.">
        <title>Spermatid head elongation with normal nuclear shaping requires ADP-ribosyltransferase PARP11 (ARTD11) in mice.</title>
        <authorList>
            <person name="Meyer-Ficca M.L."/>
            <person name="Ihara M."/>
            <person name="Bader J.J."/>
            <person name="Leu N.A."/>
            <person name="Beneke S."/>
            <person name="Meyer R.G."/>
        </authorList>
    </citation>
    <scope>FUNCTION</scope>
    <scope>SUBCELLULAR LOCATION</scope>
    <scope>MONO-ADP-RIBOSYLATION</scope>
    <scope>MUTAGENESIS OF TYR-38; PHE-48; TYR-84; GLN-93; ARG-102 AND GLY-205</scope>
</reference>
<reference key="10">
    <citation type="journal article" date="2019" name="Nat. Microbiol.">
        <title>ADP-ribosyltransferase PARP11 modulates the interferon antiviral response by mono-ADP-ribosylating the ubiquitin E3 ligase beta-TrCP.</title>
        <authorList>
            <person name="Guo T."/>
            <person name="Zuo Y."/>
            <person name="Qian L."/>
            <person name="Liu J."/>
            <person name="Yuan Y."/>
            <person name="Xu K."/>
            <person name="Miao Y."/>
            <person name="Feng Q."/>
            <person name="Chen X."/>
            <person name="Jin L."/>
            <person name="Zhang L."/>
            <person name="Dong C."/>
            <person name="Xiong S."/>
            <person name="Zheng H."/>
        </authorList>
    </citation>
    <scope>FUNCTION</scope>
    <scope>MUTAGENESIS OF HIS-204 AND TYR-236</scope>
</reference>
<reference key="11">
    <citation type="journal article" date="2021" name="Cell Biosci.">
        <title>ADP-ribosyltransferase PARP11 suppresses Zika virus in synergy with PARP12.</title>
        <authorList>
            <person name="Li L."/>
            <person name="Shi Y."/>
            <person name="Li S."/>
            <person name="Liu J."/>
            <person name="Zu S."/>
            <person name="Xu X."/>
            <person name="Gao M."/>
            <person name="Sun N."/>
            <person name="Pan C."/>
            <person name="Peng L."/>
            <person name="Yang H."/>
            <person name="Cheng G."/>
        </authorList>
    </citation>
    <scope>FUNCTION</scope>
    <scope>INDUCTION BY TYPE I INTERFERON AND ZIKA VIRUS INFECTION</scope>
    <scope>INTERACTION WITH PARP12</scope>
    <scope>MUTAGENESIS OF GLY-205</scope>
    <scope>CATALYTIC ACTIVITY</scope>
</reference>
<reference key="12">
    <citation type="submission" date="2009-02" db="PDB data bank">
        <title>Solution structure of WWE domain in poly (ADP-ribose) polymerase family, member 11 (PARP11).</title>
        <authorList>
            <consortium name="RIKEN structural genomics initiative (RSGI)"/>
        </authorList>
    </citation>
    <scope>STRUCTURE BY NMR OF 22-110</scope>
</reference>
<evidence type="ECO:0000250" key="1">
    <source>
        <dbReference type="UniProtKB" id="Q8CFF0"/>
    </source>
</evidence>
<evidence type="ECO:0000255" key="2">
    <source>
        <dbReference type="PROSITE-ProRule" id="PRU00248"/>
    </source>
</evidence>
<evidence type="ECO:0000255" key="3">
    <source>
        <dbReference type="PROSITE-ProRule" id="PRU00397"/>
    </source>
</evidence>
<evidence type="ECO:0000269" key="4">
    <source>
    </source>
</evidence>
<evidence type="ECO:0000269" key="5">
    <source>
    </source>
</evidence>
<evidence type="ECO:0000269" key="6">
    <source>
    </source>
</evidence>
<evidence type="ECO:0000269" key="7">
    <source>
    </source>
</evidence>
<evidence type="ECO:0000303" key="8">
    <source>
    </source>
</evidence>
<evidence type="ECO:0000305" key="9"/>
<evidence type="ECO:0000312" key="10">
    <source>
        <dbReference type="HGNC" id="HGNC:1186"/>
    </source>
</evidence>
<evidence type="ECO:0007829" key="11">
    <source>
        <dbReference type="PDB" id="2DK6"/>
    </source>
</evidence>
<sequence>MWEANPEMFHKAEELFSKTTNNEVDDMDTSDTQWGWFYLAECGKWHMFQPDTNSQCSVSSEDIEKSFKTNPCGSISFTTSKFSYKIDFAEMKQMNLTTGKQRLIKRAPFSISAFSYICENEAIPMPPHWENVNTQVPYQLIPLHNQTHEYNEVANLFGKTMDRNRIKRIQRIQNLDLWEFFCRKKAQLKKKRGVPQINEQMLFHGTSSEFVEAICIHNFDWRINGIHGAVFGKGTYFARDAAYSSRFCKDDIKHGNTFQIHGVSLQQRHLFRTYKSMFLARVLIGDYINGDSKYMRPPSKDGSYVNLYDSCVDDTWNPKIFVVFDANQIYPEYLIDFH</sequence>
<keyword id="KW-0002">3D-structure</keyword>
<keyword id="KW-0013">ADP-ribosylation</keyword>
<keyword id="KW-0025">Alternative splicing</keyword>
<keyword id="KW-0221">Differentiation</keyword>
<keyword id="KW-0328">Glycosyltransferase</keyword>
<keyword id="KW-0509">mRNA transport</keyword>
<keyword id="KW-0520">NAD</keyword>
<keyword id="KW-0906">Nuclear pore complex</keyword>
<keyword id="KW-0548">Nucleotidyltransferase</keyword>
<keyword id="KW-0539">Nucleus</keyword>
<keyword id="KW-0653">Protein transport</keyword>
<keyword id="KW-1267">Proteomics identification</keyword>
<keyword id="KW-1185">Reference proteome</keyword>
<keyword id="KW-0744">Spermatogenesis</keyword>
<keyword id="KW-0808">Transferase</keyword>
<keyword id="KW-0811">Translocation</keyword>
<keyword id="KW-0813">Transport</keyword>
<name>PAR11_HUMAN</name>
<organism>
    <name type="scientific">Homo sapiens</name>
    <name type="common">Human</name>
    <dbReference type="NCBI Taxonomy" id="9606"/>
    <lineage>
        <taxon>Eukaryota</taxon>
        <taxon>Metazoa</taxon>
        <taxon>Chordata</taxon>
        <taxon>Craniata</taxon>
        <taxon>Vertebrata</taxon>
        <taxon>Euteleostomi</taxon>
        <taxon>Mammalia</taxon>
        <taxon>Eutheria</taxon>
        <taxon>Euarchontoglires</taxon>
        <taxon>Primates</taxon>
        <taxon>Haplorrhini</taxon>
        <taxon>Catarrhini</taxon>
        <taxon>Hominidae</taxon>
        <taxon>Homo</taxon>
    </lineage>
</organism>
<dbReference type="EC" id="2.4.2.-" evidence="4 7"/>
<dbReference type="EMBL" id="AF263540">
    <property type="protein sequence ID" value="AAF91391.1"/>
    <property type="molecule type" value="mRNA"/>
</dbReference>
<dbReference type="EMBL" id="AK299372">
    <property type="protein sequence ID" value="BAG61362.1"/>
    <property type="molecule type" value="mRNA"/>
</dbReference>
<dbReference type="EMBL" id="CR749294">
    <property type="protein sequence ID" value="CAH18149.1"/>
    <property type="molecule type" value="mRNA"/>
</dbReference>
<dbReference type="EMBL" id="AC005842">
    <property type="status" value="NOT_ANNOTATED_CDS"/>
    <property type="molecule type" value="Genomic_DNA"/>
</dbReference>
<dbReference type="EMBL" id="AC006207">
    <property type="status" value="NOT_ANNOTATED_CDS"/>
    <property type="molecule type" value="Genomic_DNA"/>
</dbReference>
<dbReference type="EMBL" id="CH471116">
    <property type="protein sequence ID" value="EAW88853.1"/>
    <property type="molecule type" value="Genomic_DNA"/>
</dbReference>
<dbReference type="EMBL" id="BC017569">
    <property type="protein sequence ID" value="AAH17569.1"/>
    <property type="status" value="ALT_INIT"/>
    <property type="molecule type" value="mRNA"/>
</dbReference>
<dbReference type="EMBL" id="BC031073">
    <property type="protein sequence ID" value="AAH31073.1"/>
    <property type="status" value="ALT_INIT"/>
    <property type="molecule type" value="mRNA"/>
</dbReference>
<dbReference type="CCDS" id="CCDS66281.1">
    <molecule id="Q9NR21-2"/>
</dbReference>
<dbReference type="CCDS" id="CCDS8523.2">
    <molecule id="Q9NR21-4"/>
</dbReference>
<dbReference type="RefSeq" id="NP_001273450.1">
    <molecule id="Q9NR21-2"/>
    <property type="nucleotide sequence ID" value="NM_001286521.2"/>
</dbReference>
<dbReference type="RefSeq" id="NP_001273451.1">
    <molecule id="Q9NR21-2"/>
    <property type="nucleotide sequence ID" value="NM_001286522.2"/>
</dbReference>
<dbReference type="RefSeq" id="NP_065100.2">
    <molecule id="Q9NR21-4"/>
    <property type="nucleotide sequence ID" value="NM_020367.6"/>
</dbReference>
<dbReference type="RefSeq" id="XP_005253768.1">
    <property type="nucleotide sequence ID" value="XM_005253711.4"/>
</dbReference>
<dbReference type="RefSeq" id="XP_011519272.1">
    <property type="nucleotide sequence ID" value="XM_011520970.1"/>
</dbReference>
<dbReference type="RefSeq" id="XP_011519273.1">
    <property type="nucleotide sequence ID" value="XM_011520971.2"/>
</dbReference>
<dbReference type="RefSeq" id="XP_011519275.1">
    <property type="nucleotide sequence ID" value="XM_011520973.2"/>
</dbReference>
<dbReference type="RefSeq" id="XP_016875159.1">
    <property type="nucleotide sequence ID" value="XM_017019670.1"/>
</dbReference>
<dbReference type="RefSeq" id="XP_016875160.1">
    <property type="nucleotide sequence ID" value="XM_017019671.1"/>
</dbReference>
<dbReference type="PDB" id="2DK6">
    <property type="method" value="NMR"/>
    <property type="chains" value="A=22-110"/>
</dbReference>
<dbReference type="PDBsum" id="2DK6"/>
<dbReference type="SMR" id="Q9NR21"/>
<dbReference type="BioGRID" id="121365">
    <property type="interactions" value="17"/>
</dbReference>
<dbReference type="FunCoup" id="Q9NR21">
    <property type="interactions" value="3499"/>
</dbReference>
<dbReference type="IntAct" id="Q9NR21">
    <property type="interactions" value="28"/>
</dbReference>
<dbReference type="STRING" id="9606.ENSP00000228820"/>
<dbReference type="BindingDB" id="Q9NR21"/>
<dbReference type="ChEMBL" id="CHEMBL2380189"/>
<dbReference type="GuidetoPHARMACOLOGY" id="3268"/>
<dbReference type="GlyGen" id="Q9NR21">
    <property type="glycosylation" value="2 sites, 1 N-linked glycan (1 site), 1 O-linked glycan (1 site)"/>
</dbReference>
<dbReference type="iPTMnet" id="Q9NR21"/>
<dbReference type="PhosphoSitePlus" id="Q9NR21"/>
<dbReference type="BioMuta" id="PARP11"/>
<dbReference type="DMDM" id="74734315"/>
<dbReference type="MassIVE" id="Q9NR21"/>
<dbReference type="PaxDb" id="9606-ENSP00000228820"/>
<dbReference type="PeptideAtlas" id="Q9NR21"/>
<dbReference type="ProteomicsDB" id="30979"/>
<dbReference type="ProteomicsDB" id="82256">
    <molecule id="Q9NR21-1"/>
</dbReference>
<dbReference type="ProteomicsDB" id="82258">
    <molecule id="Q9NR21-4"/>
</dbReference>
<dbReference type="Antibodypedia" id="10533">
    <property type="antibodies" value="127 antibodies from 28 providers"/>
</dbReference>
<dbReference type="DNASU" id="57097"/>
<dbReference type="Ensembl" id="ENST00000228820.9">
    <molecule id="Q9NR21-4"/>
    <property type="protein sequence ID" value="ENSP00000228820.4"/>
    <property type="gene ID" value="ENSG00000111224.14"/>
</dbReference>
<dbReference type="Ensembl" id="ENST00000416739.5">
    <molecule id="Q9NR21-5"/>
    <property type="protein sequence ID" value="ENSP00000392392.1"/>
    <property type="gene ID" value="ENSG00000111224.14"/>
</dbReference>
<dbReference type="Ensembl" id="ENST00000427057.6">
    <molecule id="Q9NR21-2"/>
    <property type="protein sequence ID" value="ENSP00000397058.2"/>
    <property type="gene ID" value="ENSG00000111224.14"/>
</dbReference>
<dbReference type="Ensembl" id="ENST00000447133.7">
    <molecule id="Q9NR21-2"/>
    <property type="protein sequence ID" value="ENSP00000405385.3"/>
    <property type="gene ID" value="ENSG00000111224.14"/>
</dbReference>
<dbReference type="GeneID" id="57097"/>
<dbReference type="KEGG" id="hsa:57097"/>
<dbReference type="MANE-Select" id="ENST00000228820.9">
    <property type="protein sequence ID" value="ENSP00000228820.4"/>
    <property type="RefSeq nucleotide sequence ID" value="NM_020367.6"/>
    <property type="RefSeq protein sequence ID" value="NP_065100.2"/>
</dbReference>
<dbReference type="UCSC" id="uc001qml.4">
    <molecule id="Q9NR21-4"/>
    <property type="organism name" value="human"/>
</dbReference>
<dbReference type="AGR" id="HGNC:1186"/>
<dbReference type="CTD" id="57097"/>
<dbReference type="DisGeNET" id="57097"/>
<dbReference type="GeneCards" id="PARP11"/>
<dbReference type="HGNC" id="HGNC:1186">
    <property type="gene designation" value="PARP11"/>
</dbReference>
<dbReference type="HPA" id="ENSG00000111224">
    <property type="expression patterns" value="Low tissue specificity"/>
</dbReference>
<dbReference type="MIM" id="616706">
    <property type="type" value="gene"/>
</dbReference>
<dbReference type="neXtProt" id="NX_Q9NR21"/>
<dbReference type="OpenTargets" id="ENSG00000111224"/>
<dbReference type="PharmGKB" id="PA25507"/>
<dbReference type="VEuPathDB" id="HostDB:ENSG00000111224"/>
<dbReference type="eggNOG" id="ENOG502QT2S">
    <property type="taxonomic scope" value="Eukaryota"/>
</dbReference>
<dbReference type="GeneTree" id="ENSGT00940000156857"/>
<dbReference type="HOGENOM" id="CLU_014825_1_0_1"/>
<dbReference type="InParanoid" id="Q9NR21"/>
<dbReference type="OMA" id="TWNPRIF"/>
<dbReference type="OrthoDB" id="6133115at2759"/>
<dbReference type="PAN-GO" id="Q9NR21">
    <property type="GO annotations" value="4 GO annotations based on evolutionary models"/>
</dbReference>
<dbReference type="PhylomeDB" id="Q9NR21"/>
<dbReference type="TreeFam" id="TF338389"/>
<dbReference type="BRENDA" id="2.4.2.30">
    <property type="organism ID" value="2681"/>
</dbReference>
<dbReference type="PathwayCommons" id="Q9NR21"/>
<dbReference type="SignaLink" id="Q9NR21"/>
<dbReference type="BioGRID-ORCS" id="57097">
    <property type="hits" value="35 hits in 1159 CRISPR screens"/>
</dbReference>
<dbReference type="CD-CODE" id="D6A53B8E">
    <property type="entry name" value="Nuclear pore complex"/>
</dbReference>
<dbReference type="ChiTaRS" id="PARP11">
    <property type="organism name" value="human"/>
</dbReference>
<dbReference type="EvolutionaryTrace" id="Q9NR21"/>
<dbReference type="GenomeRNAi" id="57097"/>
<dbReference type="Pharos" id="Q9NR21">
    <property type="development level" value="Tbio"/>
</dbReference>
<dbReference type="PRO" id="PR:Q9NR21"/>
<dbReference type="Proteomes" id="UP000005640">
    <property type="component" value="Chromosome 12"/>
</dbReference>
<dbReference type="RNAct" id="Q9NR21">
    <property type="molecule type" value="protein"/>
</dbReference>
<dbReference type="Bgee" id="ENSG00000111224">
    <property type="expression patterns" value="Expressed in buccal mucosa cell and 160 other cell types or tissues"/>
</dbReference>
<dbReference type="ExpressionAtlas" id="Q9NR21">
    <property type="expression patterns" value="baseline and differential"/>
</dbReference>
<dbReference type="GO" id="GO:0005829">
    <property type="term" value="C:cytosol"/>
    <property type="evidence" value="ECO:0000314"/>
    <property type="project" value="HPA"/>
</dbReference>
<dbReference type="GO" id="GO:0016604">
    <property type="term" value="C:nuclear body"/>
    <property type="evidence" value="ECO:0000314"/>
    <property type="project" value="HPA"/>
</dbReference>
<dbReference type="GO" id="GO:0005635">
    <property type="term" value="C:nuclear envelope"/>
    <property type="evidence" value="ECO:0000314"/>
    <property type="project" value="MGI"/>
</dbReference>
<dbReference type="GO" id="GO:0005643">
    <property type="term" value="C:nuclear pore"/>
    <property type="evidence" value="ECO:0007669"/>
    <property type="project" value="UniProtKB-SubCell"/>
</dbReference>
<dbReference type="GO" id="GO:0005654">
    <property type="term" value="C:nucleoplasm"/>
    <property type="evidence" value="ECO:0000314"/>
    <property type="project" value="HPA"/>
</dbReference>
<dbReference type="GO" id="GO:0005634">
    <property type="term" value="C:nucleus"/>
    <property type="evidence" value="ECO:0000318"/>
    <property type="project" value="GO_Central"/>
</dbReference>
<dbReference type="GO" id="GO:0003950">
    <property type="term" value="F:NAD+ poly-ADP-ribosyltransferase activity"/>
    <property type="evidence" value="ECO:0000314"/>
    <property type="project" value="MGI"/>
</dbReference>
<dbReference type="GO" id="GO:1990404">
    <property type="term" value="F:NAD+-protein mono-ADP-ribosyltransferase activity"/>
    <property type="evidence" value="ECO:0000314"/>
    <property type="project" value="UniProtKB"/>
</dbReference>
<dbReference type="GO" id="GO:0140806">
    <property type="term" value="F:NAD+-protein-aspartate ADP-ribosyltransferase activity"/>
    <property type="evidence" value="ECO:0007669"/>
    <property type="project" value="RHEA"/>
</dbReference>
<dbReference type="GO" id="GO:0140803">
    <property type="term" value="F:NAD+-protein-cysteine ADP-ribosyltransferase activity"/>
    <property type="evidence" value="ECO:0007669"/>
    <property type="project" value="RHEA"/>
</dbReference>
<dbReference type="GO" id="GO:0140807">
    <property type="term" value="F:NAD+-protein-glutamate ADP-ribosyltransferase activity"/>
    <property type="evidence" value="ECO:0007669"/>
    <property type="project" value="RHEA"/>
</dbReference>
<dbReference type="GO" id="GO:0140804">
    <property type="term" value="F:NAD+-protein-lysine ADP-ribosyltransferase activity"/>
    <property type="evidence" value="ECO:0007669"/>
    <property type="project" value="RHEA"/>
</dbReference>
<dbReference type="GO" id="GO:0016779">
    <property type="term" value="F:nucleotidyltransferase activity"/>
    <property type="evidence" value="ECO:0007669"/>
    <property type="project" value="UniProtKB-KW"/>
</dbReference>
<dbReference type="GO" id="GO:0030154">
    <property type="term" value="P:cell differentiation"/>
    <property type="evidence" value="ECO:0007669"/>
    <property type="project" value="UniProtKB-KW"/>
</dbReference>
<dbReference type="GO" id="GO:0051028">
    <property type="term" value="P:mRNA transport"/>
    <property type="evidence" value="ECO:0007669"/>
    <property type="project" value="UniProtKB-KW"/>
</dbReference>
<dbReference type="GO" id="GO:0006998">
    <property type="term" value="P:nuclear envelope organization"/>
    <property type="evidence" value="ECO:0007669"/>
    <property type="project" value="Ensembl"/>
</dbReference>
<dbReference type="GO" id="GO:0070213">
    <property type="term" value="P:protein auto-ADP-ribosylation"/>
    <property type="evidence" value="ECO:0000314"/>
    <property type="project" value="UniProtKB"/>
</dbReference>
<dbReference type="GO" id="GO:0015031">
    <property type="term" value="P:protein transport"/>
    <property type="evidence" value="ECO:0007669"/>
    <property type="project" value="UniProtKB-KW"/>
</dbReference>
<dbReference type="GO" id="GO:0007283">
    <property type="term" value="P:spermatogenesis"/>
    <property type="evidence" value="ECO:0007669"/>
    <property type="project" value="UniProtKB-KW"/>
</dbReference>
<dbReference type="CDD" id="cd01439">
    <property type="entry name" value="TCCD_inducible_PARP_like"/>
    <property type="match status" value="1"/>
</dbReference>
<dbReference type="FunFam" id="3.30.720.50:FF:000006">
    <property type="entry name" value="Poly [ADP-ribose] polymerase"/>
    <property type="match status" value="1"/>
</dbReference>
<dbReference type="FunFam" id="3.90.228.10:FF:000003">
    <property type="entry name" value="TCDD-inducible poly [ADP-ribose] polymerase"/>
    <property type="match status" value="1"/>
</dbReference>
<dbReference type="Gene3D" id="3.30.720.50">
    <property type="match status" value="1"/>
</dbReference>
<dbReference type="Gene3D" id="3.90.228.10">
    <property type="match status" value="1"/>
</dbReference>
<dbReference type="InterPro" id="IPR051712">
    <property type="entry name" value="ARTD-AVP"/>
</dbReference>
<dbReference type="InterPro" id="IPR012317">
    <property type="entry name" value="Poly(ADP-ribose)pol_cat_dom"/>
</dbReference>
<dbReference type="InterPro" id="IPR004170">
    <property type="entry name" value="WWE_dom"/>
</dbReference>
<dbReference type="InterPro" id="IPR037197">
    <property type="entry name" value="WWE_dom_sf"/>
</dbReference>
<dbReference type="PANTHER" id="PTHR45740">
    <property type="entry name" value="POLY [ADP-RIBOSE] POLYMERASE"/>
    <property type="match status" value="1"/>
</dbReference>
<dbReference type="PANTHER" id="PTHR45740:SF4">
    <property type="entry name" value="PROTEIN MONO-ADP-RIBOSYLTRANSFERASE PARP11"/>
    <property type="match status" value="1"/>
</dbReference>
<dbReference type="Pfam" id="PF00644">
    <property type="entry name" value="PARP"/>
    <property type="match status" value="1"/>
</dbReference>
<dbReference type="Pfam" id="PF02825">
    <property type="entry name" value="WWE"/>
    <property type="match status" value="1"/>
</dbReference>
<dbReference type="SUPFAM" id="SSF56399">
    <property type="entry name" value="ADP-ribosylation"/>
    <property type="match status" value="1"/>
</dbReference>
<dbReference type="SUPFAM" id="SSF117839">
    <property type="entry name" value="WWE domain"/>
    <property type="match status" value="1"/>
</dbReference>
<dbReference type="PROSITE" id="PS51059">
    <property type="entry name" value="PARP_CATALYTIC"/>
    <property type="match status" value="1"/>
</dbReference>
<dbReference type="PROSITE" id="PS50918">
    <property type="entry name" value="WWE"/>
    <property type="match status" value="1"/>
</dbReference>
<gene>
    <name evidence="8 10" type="primary">PARP11</name>
    <name type="synonym">C12orf6</name>
</gene>
<protein>
    <recommendedName>
        <fullName evidence="9">Protein mono-ADP-ribosyltransferase PARP11</fullName>
        <ecNumber evidence="4 7">2.4.2.-</ecNumber>
    </recommendedName>
    <alternativeName>
        <fullName evidence="8">ADP-ribosyltransferase diphtheria toxin-like 11</fullName>
        <shortName evidence="8">ARTD11</shortName>
    </alternativeName>
    <alternativeName>
        <fullName evidence="8">Poly [ADP-ribose] polymerase 11</fullName>
        <shortName evidence="8">PARP-11</shortName>
    </alternativeName>
</protein>
<accession>Q9NR21</accession>
<accession>B4DRQ0</accession>
<accession>F8WBZ7</accession>
<accession>Q68DS1</accession>
<accession>Q8N5Y9</accession>
<comment type="function">
    <text evidence="1 4 5 6 7">Mono-ADP-ribosyltransferase that mediates mono-ADP-ribosylation of target proteins (PubMed:25043379, PubMed:25673562). Plays a role in nuclear envelope stability and nuclear remodeling during spermiogenesis (By similarity). Inhibits the type I interferon activated signaling pathway (PubMed:30988430). Mechanistically, mono-ADP-ribosylates beta-TrCP/BTRC to promote IFNAR1 ubiquitination and protect BTRC from ubiquitin-proteasome degradation. Additionally, acts as an antiviral factor by cooperating with PARP12 to suppress Zika virus replication, independent of IFNAR1 regulation or intrinsic PARP enzymatic activity (PubMed:34187568). Instead, facilitates the degradation of viral NS1 and NS3 proteins, potentially disrupting viral replication (PubMed:34187568).</text>
</comment>
<comment type="catalytic activity">
    <reaction evidence="4">
        <text>L-aspartyl-[protein] + NAD(+) = 4-O-(ADP-D-ribosyl)-L-aspartyl-[protein] + nicotinamide</text>
        <dbReference type="Rhea" id="RHEA:54424"/>
        <dbReference type="Rhea" id="RHEA-COMP:9867"/>
        <dbReference type="Rhea" id="RHEA-COMP:13832"/>
        <dbReference type="ChEBI" id="CHEBI:17154"/>
        <dbReference type="ChEBI" id="CHEBI:29961"/>
        <dbReference type="ChEBI" id="CHEBI:57540"/>
        <dbReference type="ChEBI" id="CHEBI:138102"/>
    </reaction>
    <physiologicalReaction direction="left-to-right" evidence="4">
        <dbReference type="Rhea" id="RHEA:54425"/>
    </physiologicalReaction>
</comment>
<comment type="catalytic activity">
    <reaction evidence="4">
        <text>L-cysteinyl-[protein] + NAD(+) = S-(ADP-D-ribosyl)-L-cysteinyl-[protein] + nicotinamide + H(+)</text>
        <dbReference type="Rhea" id="RHEA:56612"/>
        <dbReference type="Rhea" id="RHEA-COMP:10131"/>
        <dbReference type="Rhea" id="RHEA-COMP:14624"/>
        <dbReference type="ChEBI" id="CHEBI:15378"/>
        <dbReference type="ChEBI" id="CHEBI:17154"/>
        <dbReference type="ChEBI" id="CHEBI:29950"/>
        <dbReference type="ChEBI" id="CHEBI:57540"/>
        <dbReference type="ChEBI" id="CHEBI:140607"/>
    </reaction>
    <physiologicalReaction direction="left-to-right" evidence="4">
        <dbReference type="Rhea" id="RHEA:56613"/>
    </physiologicalReaction>
</comment>
<comment type="catalytic activity">
    <reaction evidence="4">
        <text>L-glutamyl-[protein] + NAD(+) = 5-O-(ADP-D-ribosyl)-L-glutamyl-[protein] + nicotinamide</text>
        <dbReference type="Rhea" id="RHEA:58224"/>
        <dbReference type="Rhea" id="RHEA-COMP:10208"/>
        <dbReference type="Rhea" id="RHEA-COMP:15089"/>
        <dbReference type="ChEBI" id="CHEBI:17154"/>
        <dbReference type="ChEBI" id="CHEBI:29973"/>
        <dbReference type="ChEBI" id="CHEBI:57540"/>
        <dbReference type="ChEBI" id="CHEBI:142540"/>
    </reaction>
    <physiologicalReaction direction="left-to-right" evidence="4">
        <dbReference type="Rhea" id="RHEA:58225"/>
    </physiologicalReaction>
</comment>
<comment type="catalytic activity">
    <reaction evidence="4">
        <text>L-lysyl-[protein] + NAD(+) = N(6)-(ADP-D-ribosyl)-L-lysyl-[protein] + nicotinamide + H(+)</text>
        <dbReference type="Rhea" id="RHEA:58220"/>
        <dbReference type="Rhea" id="RHEA-COMP:9752"/>
        <dbReference type="Rhea" id="RHEA-COMP:15088"/>
        <dbReference type="ChEBI" id="CHEBI:15378"/>
        <dbReference type="ChEBI" id="CHEBI:17154"/>
        <dbReference type="ChEBI" id="CHEBI:29969"/>
        <dbReference type="ChEBI" id="CHEBI:57540"/>
        <dbReference type="ChEBI" id="CHEBI:142515"/>
    </reaction>
    <physiologicalReaction direction="left-to-right" evidence="4">
        <dbReference type="Rhea" id="RHEA:58221"/>
    </physiologicalReaction>
</comment>
<comment type="subunit">
    <text evidence="7">Interacts with PARP12; this interaction plays a role in zika virus suppression.</text>
</comment>
<comment type="interaction">
    <interactant intactId="EBI-17644640">
        <id>Q9NR21-1</id>
    </interactant>
    <interactant intactId="EBI-2340258">
        <id>Q8N9I9</id>
        <label>DTX3</label>
    </interactant>
    <organismsDiffer>false</organismsDiffer>
    <experiments>3</experiments>
</comment>
<comment type="interaction">
    <interactant intactId="EBI-17644640">
        <id>Q9NR21-1</id>
    </interactant>
    <interactant intactId="EBI-740290">
        <id>Q969Y2</id>
        <label>GTPBP3</label>
    </interactant>
    <organismsDiffer>false</organismsDiffer>
    <experiments>7</experiments>
</comment>
<comment type="interaction">
    <interactant intactId="EBI-17644640">
        <id>Q9NR21-1</id>
    </interactant>
    <interactant intactId="EBI-10961706">
        <id>Q96ED9-2</id>
        <label>HOOK2</label>
    </interactant>
    <organismsDiffer>false</organismsDiffer>
    <experiments>3</experiments>
</comment>
<comment type="interaction">
    <interactant intactId="EBI-17644640">
        <id>Q9NR21-1</id>
    </interactant>
    <interactant intactId="EBI-12039345">
        <id>Q9UBR4-2</id>
        <label>LHX3</label>
    </interactant>
    <organismsDiffer>false</organismsDiffer>
    <experiments>3</experiments>
</comment>
<comment type="interaction">
    <interactant intactId="EBI-17644640">
        <id>Q9NR21-1</id>
    </interactant>
    <interactant intactId="EBI-2865388">
        <id>Q969G2</id>
        <label>LHX4</label>
    </interactant>
    <organismsDiffer>false</organismsDiffer>
    <experiments>3</experiments>
</comment>
<comment type="interaction">
    <interactant intactId="EBI-17159452">
        <id>Q9NR21-5</id>
    </interactant>
    <interactant intactId="EBI-491169">
        <id>P07550</id>
        <label>ADRB2</label>
    </interactant>
    <organismsDiffer>false</organismsDiffer>
    <experiments>3</experiments>
</comment>
<comment type="interaction">
    <interactant intactId="EBI-17159452">
        <id>Q9NR21-5</id>
    </interactant>
    <interactant intactId="EBI-25837549">
        <id>P28329-3</id>
        <label>CHAT</label>
    </interactant>
    <organismsDiffer>false</organismsDiffer>
    <experiments>3</experiments>
</comment>
<comment type="interaction">
    <interactant intactId="EBI-17159452">
        <id>Q9NR21-5</id>
    </interactant>
    <interactant intactId="EBI-10976677">
        <id>G5E9A7</id>
        <label>DMWD</label>
    </interactant>
    <organismsDiffer>false</organismsDiffer>
    <experiments>3</experiments>
</comment>
<comment type="interaction">
    <interactant intactId="EBI-17159452">
        <id>Q9NR21-5</id>
    </interactant>
    <interactant intactId="EBI-348399">
        <id>P22607</id>
        <label>FGFR3</label>
    </interactant>
    <organismsDiffer>false</organismsDiffer>
    <experiments>3</experiments>
</comment>
<comment type="interaction">
    <interactant intactId="EBI-17159452">
        <id>Q9NR21-5</id>
    </interactant>
    <interactant intactId="EBI-8285963">
        <id>Q14957</id>
        <label>GRIN2C</label>
    </interactant>
    <organismsDiffer>false</organismsDiffer>
    <experiments>3</experiments>
</comment>
<comment type="interaction">
    <interactant intactId="EBI-17159452">
        <id>Q9NR21-5</id>
    </interactant>
    <interactant intactId="EBI-747754">
        <id>P28799</id>
        <label>GRN</label>
    </interactant>
    <organismsDiffer>false</organismsDiffer>
    <experiments>3</experiments>
</comment>
<comment type="interaction">
    <interactant intactId="EBI-17159452">
        <id>Q9NR21-5</id>
    </interactant>
    <interactant intactId="EBI-351506">
        <id>P06396</id>
        <label>GSN</label>
    </interactant>
    <organismsDiffer>false</organismsDiffer>
    <experiments>3</experiments>
</comment>
<comment type="interaction">
    <interactant intactId="EBI-17159452">
        <id>Q9NR21-5</id>
    </interactant>
    <interactant intactId="EBI-1055254">
        <id>Q8WXH2</id>
        <label>JPH3</label>
    </interactant>
    <organismsDiffer>false</organismsDiffer>
    <experiments>3</experiments>
</comment>
<comment type="interaction">
    <interactant intactId="EBI-17159452">
        <id>Q9NR21-5</id>
    </interactant>
    <interactant intactId="EBI-10975473">
        <id>O60333-2</id>
        <label>KIF1B</label>
    </interactant>
    <organismsDiffer>false</organismsDiffer>
    <experiments>3</experiments>
</comment>
<comment type="interaction">
    <interactant intactId="EBI-17159452">
        <id>Q9NR21-5</id>
    </interactant>
    <interactant intactId="EBI-21251460">
        <id>O60260-5</id>
        <label>PRKN</label>
    </interactant>
    <organismsDiffer>false</organismsDiffer>
    <experiments>3</experiments>
</comment>
<comment type="interaction">
    <interactant intactId="EBI-17159452">
        <id>Q9NR21-5</id>
    </interactant>
    <interactant intactId="EBI-396669">
        <id>Q9Y3C5</id>
        <label>RNF11</label>
    </interactant>
    <organismsDiffer>false</organismsDiffer>
    <experiments>3</experiments>
</comment>
<comment type="interaction">
    <interactant intactId="EBI-17159452">
        <id>Q9NR21-5</id>
    </interactant>
    <interactant intactId="EBI-985879">
        <id>P37840</id>
        <label>SNCA</label>
    </interactant>
    <organismsDiffer>false</organismsDiffer>
    <experiments>3</experiments>
</comment>
<comment type="interaction">
    <interactant intactId="EBI-17159452">
        <id>Q9NR21-5</id>
    </interactant>
    <interactant intactId="EBI-5235340">
        <id>Q7Z699</id>
        <label>SPRED1</label>
    </interactant>
    <organismsDiffer>false</organismsDiffer>
    <experiments>3</experiments>
</comment>
<comment type="interaction">
    <interactant intactId="EBI-17159452">
        <id>Q9NR21-5</id>
    </interactant>
    <interactant intactId="EBI-372899">
        <id>Q13148</id>
        <label>TARDBP</label>
    </interactant>
    <organismsDiffer>false</organismsDiffer>
    <experiments>3</experiments>
</comment>
<comment type="interaction">
    <interactant intactId="EBI-17159452">
        <id>Q9NR21-5</id>
    </interactant>
    <interactant intactId="EBI-12806590">
        <id>Q86WV8</id>
        <label>TSC1</label>
    </interactant>
    <organismsDiffer>false</organismsDiffer>
    <experiments>3</experiments>
</comment>
<comment type="interaction">
    <interactant intactId="EBI-17159452">
        <id>Q9NR21-5</id>
    </interactant>
    <interactant intactId="EBI-25900580">
        <id>Q9Y649</id>
    </interactant>
    <organismsDiffer>false</organismsDiffer>
    <experiments>3</experiments>
</comment>
<comment type="subcellular location">
    <subcellularLocation>
        <location evidence="5">Nucleus</location>
        <location evidence="5">Nuclear pore complex</location>
    </subcellularLocation>
    <text evidence="5">Colocalizes with NUP153 at nuclear pores.</text>
</comment>
<comment type="alternative products">
    <event type="alternative splicing"/>
    <isoform>
        <id>Q9NR21-4</id>
        <name>1</name>
        <sequence type="displayed"/>
    </isoform>
    <isoform>
        <id>Q9NR21-2</id>
        <name>2</name>
        <sequence type="described" ref="VSP_059435 VSP_059437"/>
    </isoform>
    <isoform>
        <id>Q9NR21-1</id>
        <name>3</name>
        <sequence type="described" ref="VSP_059436"/>
    </isoform>
    <isoform>
        <id>Q9NR21-5</id>
        <name>4</name>
        <sequence type="described" ref="VSP_059438 VSP_059439"/>
    </isoform>
</comment>
<comment type="induction">
    <text evidence="7">By type I interferon or viral infection including zika virus infection.</text>
</comment>
<comment type="PTM">
    <text evidence="4 5">Auto-mono-ADP-ribosylated.</text>
</comment>
<comment type="miscellaneous">
    <molecule>Isoform 4</molecule>
    <text evidence="9">May be produced at very low levels due to a premature stop codon in the mRNA, leading to nonsense-mediated mRNA decay.</text>
</comment>
<comment type="similarity">
    <text evidence="9">Belongs to the ARTD/PARP family.</text>
</comment>
<comment type="sequence caution" evidence="9">
    <conflict type="erroneous initiation">
        <sequence resource="EMBL-CDS" id="AAH17569"/>
    </conflict>
    <text>Truncated N-terminus.</text>
</comment>
<comment type="sequence caution" evidence="9">
    <conflict type="erroneous initiation">
        <sequence resource="EMBL-CDS" id="AAH31073"/>
    </conflict>
    <text>Truncated N-terminus.</text>
</comment>
<proteinExistence type="evidence at protein level"/>
<feature type="chain" id="PRO_0000273419" description="Protein mono-ADP-ribosyltransferase PARP11">
    <location>
        <begin position="1"/>
        <end position="338"/>
    </location>
</feature>
<feature type="domain" description="WWE" evidence="2">
    <location>
        <begin position="22"/>
        <end position="106"/>
    </location>
</feature>
<feature type="domain" description="PARP catalytic" evidence="3">
    <location>
        <begin position="123"/>
        <end position="338"/>
    </location>
</feature>
<feature type="modified residue" description="ADP-ribosyl glutamic acid" evidence="4">
    <location>
        <position position="13"/>
    </location>
</feature>
<feature type="modified residue" description="N6-(ADP-ribosyl)lysine" evidence="4">
    <location>
        <position position="18"/>
    </location>
</feature>
<feature type="modified residue" description="ADP-ribosylcysteine" evidence="4">
    <location>
        <position position="56"/>
    </location>
</feature>
<feature type="modified residue" description="ADP-ribosylcysteine" evidence="4">
    <location>
        <position position="72"/>
    </location>
</feature>
<feature type="modified residue" description="ADP-ribosyl aspartic acid" evidence="4">
    <location>
        <position position="87"/>
    </location>
</feature>
<feature type="splice variant" id="VSP_059435" description="In isoform 2.">
    <location>
        <begin position="1"/>
        <end position="81"/>
    </location>
</feature>
<feature type="splice variant" id="VSP_059436" description="In isoform 3.">
    <location>
        <begin position="1"/>
        <end position="7"/>
    </location>
</feature>
<feature type="splice variant" id="VSP_059437" description="In isoform 2.">
    <original>FSYKIDFA</original>
    <variation>MWEVAHVS</variation>
    <location>
        <begin position="82"/>
        <end position="89"/>
    </location>
</feature>
<feature type="splice variant" id="VSP_059438" description="In isoform 4.">
    <original>GTYFAR</original>
    <variation>DNMWKL</variation>
    <location>
        <begin position="234"/>
        <end position="239"/>
    </location>
</feature>
<feature type="splice variant" id="VSP_059439" description="In isoform 4.">
    <location>
        <begin position="240"/>
        <end position="338"/>
    </location>
</feature>
<feature type="mutagenesis site" description="No effect on subcellular location at the nuclear envelope." evidence="5">
    <original>Y</original>
    <variation>A</variation>
    <location>
        <position position="38"/>
    </location>
</feature>
<feature type="mutagenesis site" description="No effect on subcellular location at the nuclear envelope." evidence="5">
    <original>F</original>
    <variation>A</variation>
    <location>
        <position position="48"/>
    </location>
</feature>
<feature type="mutagenesis site" description="Loss of subcellular location at the nuclear envelope." evidence="5">
    <original>Y</original>
    <variation>A</variation>
    <location>
        <position position="84"/>
    </location>
</feature>
<feature type="mutagenesis site" description="Loss of subcellular location at the nuclear envelope." evidence="5">
    <original>Q</original>
    <variation>A</variation>
    <location>
        <position position="93"/>
    </location>
</feature>
<feature type="mutagenesis site" description="Loss of subcellular location at the nuclear envelope." evidence="5">
    <original>R</original>
    <variation>A</variation>
    <location>
        <position position="102"/>
    </location>
</feature>
<feature type="mutagenesis site" description="Catalytically inactive mutant; when associated with S-236." evidence="6">
    <original>H</original>
    <variation>S</variation>
    <location>
        <position position="204"/>
    </location>
</feature>
<feature type="mutagenesis site" description="Catalytically inactive mutant." evidence="7">
    <original>G</original>
    <variation>A</variation>
    <location>
        <position position="205"/>
    </location>
</feature>
<feature type="mutagenesis site" description="No effect on subcellular location at the nuclear envelope." evidence="5">
    <original>G</original>
    <variation>W</variation>
    <location>
        <position position="205"/>
    </location>
</feature>
<feature type="mutagenesis site" description="Catalytically inactive mutant; when associated with S-204." evidence="6">
    <original>Y</original>
    <variation>S</variation>
    <location>
        <position position="236"/>
    </location>
</feature>
<feature type="strand" evidence="11">
    <location>
        <begin position="34"/>
        <end position="38"/>
    </location>
</feature>
<feature type="strand" evidence="11">
    <location>
        <begin position="41"/>
        <end position="43"/>
    </location>
</feature>
<feature type="strand" evidence="11">
    <location>
        <begin position="51"/>
        <end position="53"/>
    </location>
</feature>
<feature type="helix" evidence="11">
    <location>
        <begin position="60"/>
        <end position="69"/>
    </location>
</feature>
<feature type="strand" evidence="11">
    <location>
        <begin position="73"/>
        <end position="79"/>
    </location>
</feature>
<feature type="strand" evidence="11">
    <location>
        <begin position="82"/>
        <end position="87"/>
    </location>
</feature>
<feature type="turn" evidence="11">
    <location>
        <begin position="88"/>
        <end position="91"/>
    </location>
</feature>
<feature type="strand" evidence="11">
    <location>
        <begin position="92"/>
        <end position="98"/>
    </location>
</feature>
<feature type="strand" evidence="11">
    <location>
        <begin position="101"/>
        <end position="109"/>
    </location>
</feature>